<protein>
    <recommendedName>
        <fullName evidence="1">Aspartate carbamoyltransferase catalytic subunit</fullName>
        <ecNumber evidence="1">2.1.3.2</ecNumber>
    </recommendedName>
    <alternativeName>
        <fullName evidence="1">Aspartate transcarbamylase</fullName>
        <shortName evidence="1">ATCase</shortName>
    </alternativeName>
</protein>
<evidence type="ECO:0000255" key="1">
    <source>
        <dbReference type="HAMAP-Rule" id="MF_00001"/>
    </source>
</evidence>
<proteinExistence type="inferred from homology"/>
<reference key="1">
    <citation type="journal article" date="2001" name="Lancet">
        <title>Whole genome sequencing of meticillin-resistant Staphylococcus aureus.</title>
        <authorList>
            <person name="Kuroda M."/>
            <person name="Ohta T."/>
            <person name="Uchiyama I."/>
            <person name="Baba T."/>
            <person name="Yuzawa H."/>
            <person name="Kobayashi I."/>
            <person name="Cui L."/>
            <person name="Oguchi A."/>
            <person name="Aoki K."/>
            <person name="Nagai Y."/>
            <person name="Lian J.-Q."/>
            <person name="Ito T."/>
            <person name="Kanamori M."/>
            <person name="Matsumaru H."/>
            <person name="Maruyama A."/>
            <person name="Murakami H."/>
            <person name="Hosoyama A."/>
            <person name="Mizutani-Ui Y."/>
            <person name="Takahashi N.K."/>
            <person name="Sawano T."/>
            <person name="Inoue R."/>
            <person name="Kaito C."/>
            <person name="Sekimizu K."/>
            <person name="Hirakawa H."/>
            <person name="Kuhara S."/>
            <person name="Goto S."/>
            <person name="Yabuzaki J."/>
            <person name="Kanehisa M."/>
            <person name="Yamashita A."/>
            <person name="Oshima K."/>
            <person name="Furuya K."/>
            <person name="Yoshino C."/>
            <person name="Shiba T."/>
            <person name="Hattori M."/>
            <person name="Ogasawara N."/>
            <person name="Hayashi H."/>
            <person name="Hiramatsu K."/>
        </authorList>
    </citation>
    <scope>NUCLEOTIDE SEQUENCE [LARGE SCALE GENOMIC DNA]</scope>
    <source>
        <strain>Mu50 / ATCC 700699</strain>
    </source>
</reference>
<comment type="function">
    <text evidence="1">Catalyzes the condensation of carbamoyl phosphate and aspartate to form carbamoyl aspartate and inorganic phosphate, the committed step in the de novo pyrimidine nucleotide biosynthesis pathway.</text>
</comment>
<comment type="catalytic activity">
    <reaction evidence="1">
        <text>carbamoyl phosphate + L-aspartate = N-carbamoyl-L-aspartate + phosphate + H(+)</text>
        <dbReference type="Rhea" id="RHEA:20013"/>
        <dbReference type="ChEBI" id="CHEBI:15378"/>
        <dbReference type="ChEBI" id="CHEBI:29991"/>
        <dbReference type="ChEBI" id="CHEBI:32814"/>
        <dbReference type="ChEBI" id="CHEBI:43474"/>
        <dbReference type="ChEBI" id="CHEBI:58228"/>
        <dbReference type="EC" id="2.1.3.2"/>
    </reaction>
</comment>
<comment type="pathway">
    <text evidence="1">Pyrimidine metabolism; UMP biosynthesis via de novo pathway; (S)-dihydroorotate from bicarbonate: step 2/3.</text>
</comment>
<comment type="subunit">
    <text evidence="1">Heterododecamer (2C3:3R2) of six catalytic PyrB chains organized as two trimers (C3), and six regulatory PyrI chains organized as three dimers (R2).</text>
</comment>
<comment type="similarity">
    <text evidence="1">Belongs to the aspartate/ornithine carbamoyltransferase superfamily. ATCase family.</text>
</comment>
<organism>
    <name type="scientific">Staphylococcus aureus (strain Mu50 / ATCC 700699)</name>
    <dbReference type="NCBI Taxonomy" id="158878"/>
    <lineage>
        <taxon>Bacteria</taxon>
        <taxon>Bacillati</taxon>
        <taxon>Bacillota</taxon>
        <taxon>Bacilli</taxon>
        <taxon>Bacillales</taxon>
        <taxon>Staphylococcaceae</taxon>
        <taxon>Staphylococcus</taxon>
    </lineage>
</organism>
<gene>
    <name evidence="1" type="primary">pyrB</name>
    <name type="ordered locus">SAV1200</name>
</gene>
<sequence length="293" mass="33258">MNHLLSMEHLSTDQIYKLIQKASQFKSGERQLPNFEGKYVANLFFENSTRTKCSFEMAELKLGLKTISFETSTSSVSKGESLYDTCKTLESIGCDLLVIRHPFNNYYEKLANINIPIANAGDGSGQHPTQSLLDLMTIYEEYGYFEGLNVLICGDIKNSRVARSNYHSLKALGANVMFNSPNAWIDDSLEAPYVNIDDVIETVDIVMLLRIQHERHGLAEETRFAADDYHQKHGLNEVRYNKLQEHAIVMHPAPVNRGVEIQSDLVEASKSRIFKQMENGVYLRMAVIDELLK</sequence>
<name>PYRB_STAAM</name>
<accession>P65617</accession>
<accession>Q99UR8</accession>
<dbReference type="EC" id="2.1.3.2" evidence="1"/>
<dbReference type="EMBL" id="BA000017">
    <property type="protein sequence ID" value="BAB57362.1"/>
    <property type="molecule type" value="Genomic_DNA"/>
</dbReference>
<dbReference type="RefSeq" id="WP_001016166.1">
    <property type="nucleotide sequence ID" value="NC_002758.2"/>
</dbReference>
<dbReference type="SMR" id="P65617"/>
<dbReference type="KEGG" id="sav:SAV1200"/>
<dbReference type="HOGENOM" id="CLU_043846_2_1_9"/>
<dbReference type="PhylomeDB" id="P65617"/>
<dbReference type="UniPathway" id="UPA00070">
    <property type="reaction ID" value="UER00116"/>
</dbReference>
<dbReference type="Proteomes" id="UP000002481">
    <property type="component" value="Chromosome"/>
</dbReference>
<dbReference type="GO" id="GO:0005829">
    <property type="term" value="C:cytosol"/>
    <property type="evidence" value="ECO:0007669"/>
    <property type="project" value="TreeGrafter"/>
</dbReference>
<dbReference type="GO" id="GO:0016597">
    <property type="term" value="F:amino acid binding"/>
    <property type="evidence" value="ECO:0007669"/>
    <property type="project" value="InterPro"/>
</dbReference>
<dbReference type="GO" id="GO:0004070">
    <property type="term" value="F:aspartate carbamoyltransferase activity"/>
    <property type="evidence" value="ECO:0007669"/>
    <property type="project" value="UniProtKB-UniRule"/>
</dbReference>
<dbReference type="GO" id="GO:0006207">
    <property type="term" value="P:'de novo' pyrimidine nucleobase biosynthetic process"/>
    <property type="evidence" value="ECO:0007669"/>
    <property type="project" value="InterPro"/>
</dbReference>
<dbReference type="GO" id="GO:0044205">
    <property type="term" value="P:'de novo' UMP biosynthetic process"/>
    <property type="evidence" value="ECO:0007669"/>
    <property type="project" value="UniProtKB-UniRule"/>
</dbReference>
<dbReference type="GO" id="GO:0006520">
    <property type="term" value="P:amino acid metabolic process"/>
    <property type="evidence" value="ECO:0007669"/>
    <property type="project" value="InterPro"/>
</dbReference>
<dbReference type="FunFam" id="3.40.50.1370:FF:000011">
    <property type="entry name" value="Aspartate carbamoyltransferase"/>
    <property type="match status" value="1"/>
</dbReference>
<dbReference type="Gene3D" id="3.40.50.1370">
    <property type="entry name" value="Aspartate/ornithine carbamoyltransferase"/>
    <property type="match status" value="2"/>
</dbReference>
<dbReference type="HAMAP" id="MF_00001">
    <property type="entry name" value="Asp_carb_tr"/>
    <property type="match status" value="1"/>
</dbReference>
<dbReference type="InterPro" id="IPR006132">
    <property type="entry name" value="Asp/Orn_carbamoyltranf_P-bd"/>
</dbReference>
<dbReference type="InterPro" id="IPR006130">
    <property type="entry name" value="Asp/Orn_carbamoylTrfase"/>
</dbReference>
<dbReference type="InterPro" id="IPR036901">
    <property type="entry name" value="Asp/Orn_carbamoylTrfase_sf"/>
</dbReference>
<dbReference type="InterPro" id="IPR002082">
    <property type="entry name" value="Asp_carbamoyltransf"/>
</dbReference>
<dbReference type="InterPro" id="IPR006131">
    <property type="entry name" value="Asp_carbamoyltransf_Asp/Orn-bd"/>
</dbReference>
<dbReference type="NCBIfam" id="TIGR00670">
    <property type="entry name" value="asp_carb_tr"/>
    <property type="match status" value="1"/>
</dbReference>
<dbReference type="NCBIfam" id="NF002032">
    <property type="entry name" value="PRK00856.1"/>
    <property type="match status" value="1"/>
</dbReference>
<dbReference type="PANTHER" id="PTHR45753:SF6">
    <property type="entry name" value="ASPARTATE CARBAMOYLTRANSFERASE"/>
    <property type="match status" value="1"/>
</dbReference>
<dbReference type="PANTHER" id="PTHR45753">
    <property type="entry name" value="ORNITHINE CARBAMOYLTRANSFERASE, MITOCHONDRIAL"/>
    <property type="match status" value="1"/>
</dbReference>
<dbReference type="Pfam" id="PF00185">
    <property type="entry name" value="OTCace"/>
    <property type="match status" value="1"/>
</dbReference>
<dbReference type="Pfam" id="PF02729">
    <property type="entry name" value="OTCace_N"/>
    <property type="match status" value="1"/>
</dbReference>
<dbReference type="PRINTS" id="PR00100">
    <property type="entry name" value="AOTCASE"/>
</dbReference>
<dbReference type="PRINTS" id="PR00101">
    <property type="entry name" value="ATCASE"/>
</dbReference>
<dbReference type="SUPFAM" id="SSF53671">
    <property type="entry name" value="Aspartate/ornithine carbamoyltransferase"/>
    <property type="match status" value="1"/>
</dbReference>
<dbReference type="PROSITE" id="PS00097">
    <property type="entry name" value="CARBAMOYLTRANSFERASE"/>
    <property type="match status" value="1"/>
</dbReference>
<keyword id="KW-0665">Pyrimidine biosynthesis</keyword>
<keyword id="KW-0808">Transferase</keyword>
<feature type="chain" id="PRO_0000113194" description="Aspartate carbamoyltransferase catalytic subunit">
    <location>
        <begin position="1"/>
        <end position="293"/>
    </location>
</feature>
<feature type="binding site" evidence="1">
    <location>
        <position position="50"/>
    </location>
    <ligand>
        <name>carbamoyl phosphate</name>
        <dbReference type="ChEBI" id="CHEBI:58228"/>
    </ligand>
</feature>
<feature type="binding site" evidence="1">
    <location>
        <position position="51"/>
    </location>
    <ligand>
        <name>carbamoyl phosphate</name>
        <dbReference type="ChEBI" id="CHEBI:58228"/>
    </ligand>
</feature>
<feature type="binding site" evidence="1">
    <location>
        <position position="78"/>
    </location>
    <ligand>
        <name>L-aspartate</name>
        <dbReference type="ChEBI" id="CHEBI:29991"/>
    </ligand>
</feature>
<feature type="binding site" evidence="1">
    <location>
        <position position="100"/>
    </location>
    <ligand>
        <name>carbamoyl phosphate</name>
        <dbReference type="ChEBI" id="CHEBI:58228"/>
    </ligand>
</feature>
<feature type="binding site" evidence="1">
    <location>
        <position position="127"/>
    </location>
    <ligand>
        <name>carbamoyl phosphate</name>
        <dbReference type="ChEBI" id="CHEBI:58228"/>
    </ligand>
</feature>
<feature type="binding site" evidence="1">
    <location>
        <position position="130"/>
    </location>
    <ligand>
        <name>carbamoyl phosphate</name>
        <dbReference type="ChEBI" id="CHEBI:58228"/>
    </ligand>
</feature>
<feature type="binding site" evidence="1">
    <location>
        <position position="160"/>
    </location>
    <ligand>
        <name>L-aspartate</name>
        <dbReference type="ChEBI" id="CHEBI:29991"/>
    </ligand>
</feature>
<feature type="binding site" evidence="1">
    <location>
        <position position="210"/>
    </location>
    <ligand>
        <name>L-aspartate</name>
        <dbReference type="ChEBI" id="CHEBI:29991"/>
    </ligand>
</feature>
<feature type="binding site" evidence="1">
    <location>
        <position position="253"/>
    </location>
    <ligand>
        <name>carbamoyl phosphate</name>
        <dbReference type="ChEBI" id="CHEBI:58228"/>
    </ligand>
</feature>
<feature type="binding site" evidence="1">
    <location>
        <position position="254"/>
    </location>
    <ligand>
        <name>carbamoyl phosphate</name>
        <dbReference type="ChEBI" id="CHEBI:58228"/>
    </ligand>
</feature>